<dbReference type="EMBL" id="CP000263">
    <property type="protein sequence ID" value="ABJ90794.1"/>
    <property type="molecule type" value="Genomic_DNA"/>
</dbReference>
<dbReference type="RefSeq" id="WP_011672713.1">
    <property type="nucleotide sequence ID" value="NC_008513.1"/>
</dbReference>
<dbReference type="SMR" id="Q057A5"/>
<dbReference type="STRING" id="372461.BCc_340"/>
<dbReference type="KEGG" id="bcc:BCc_340"/>
<dbReference type="eggNOG" id="COG0088">
    <property type="taxonomic scope" value="Bacteria"/>
</dbReference>
<dbReference type="HOGENOM" id="CLU_041575_5_2_6"/>
<dbReference type="OrthoDB" id="9803201at2"/>
<dbReference type="Proteomes" id="UP000000669">
    <property type="component" value="Chromosome"/>
</dbReference>
<dbReference type="GO" id="GO:1990904">
    <property type="term" value="C:ribonucleoprotein complex"/>
    <property type="evidence" value="ECO:0007669"/>
    <property type="project" value="UniProtKB-KW"/>
</dbReference>
<dbReference type="GO" id="GO:0005840">
    <property type="term" value="C:ribosome"/>
    <property type="evidence" value="ECO:0007669"/>
    <property type="project" value="UniProtKB-KW"/>
</dbReference>
<dbReference type="GO" id="GO:0019843">
    <property type="term" value="F:rRNA binding"/>
    <property type="evidence" value="ECO:0007669"/>
    <property type="project" value="UniProtKB-UniRule"/>
</dbReference>
<dbReference type="GO" id="GO:0003735">
    <property type="term" value="F:structural constituent of ribosome"/>
    <property type="evidence" value="ECO:0007669"/>
    <property type="project" value="InterPro"/>
</dbReference>
<dbReference type="GO" id="GO:0006412">
    <property type="term" value="P:translation"/>
    <property type="evidence" value="ECO:0007669"/>
    <property type="project" value="UniProtKB-UniRule"/>
</dbReference>
<dbReference type="Gene3D" id="3.40.1370.10">
    <property type="match status" value="1"/>
</dbReference>
<dbReference type="HAMAP" id="MF_01328_B">
    <property type="entry name" value="Ribosomal_uL4_B"/>
    <property type="match status" value="1"/>
</dbReference>
<dbReference type="InterPro" id="IPR002136">
    <property type="entry name" value="Ribosomal_uL4"/>
</dbReference>
<dbReference type="InterPro" id="IPR013005">
    <property type="entry name" value="Ribosomal_uL4-like"/>
</dbReference>
<dbReference type="InterPro" id="IPR023574">
    <property type="entry name" value="Ribosomal_uL4_dom_sf"/>
</dbReference>
<dbReference type="NCBIfam" id="TIGR03953">
    <property type="entry name" value="rplD_bact"/>
    <property type="match status" value="1"/>
</dbReference>
<dbReference type="PANTHER" id="PTHR10746">
    <property type="entry name" value="50S RIBOSOMAL PROTEIN L4"/>
    <property type="match status" value="1"/>
</dbReference>
<dbReference type="PANTHER" id="PTHR10746:SF6">
    <property type="entry name" value="LARGE RIBOSOMAL SUBUNIT PROTEIN UL4M"/>
    <property type="match status" value="1"/>
</dbReference>
<dbReference type="Pfam" id="PF00573">
    <property type="entry name" value="Ribosomal_L4"/>
    <property type="match status" value="1"/>
</dbReference>
<dbReference type="SUPFAM" id="SSF52166">
    <property type="entry name" value="Ribosomal protein L4"/>
    <property type="match status" value="1"/>
</dbReference>
<name>RL4_BUCCC</name>
<comment type="function">
    <text evidence="1">One of the primary rRNA binding proteins, this protein initially binds near the 5'-end of the 23S rRNA. It is important during the early stages of 50S assembly. It makes multiple contacts with different domains of the 23S rRNA in the assembled 50S subunit and ribosome.</text>
</comment>
<comment type="function">
    <text evidence="1">Forms part of the polypeptide exit tunnel.</text>
</comment>
<comment type="subunit">
    <text evidence="1">Part of the 50S ribosomal subunit.</text>
</comment>
<comment type="similarity">
    <text evidence="1">Belongs to the universal ribosomal protein uL4 family.</text>
</comment>
<reference key="1">
    <citation type="journal article" date="2006" name="Science">
        <title>A small microbial genome: the end of a long symbiotic relationship?</title>
        <authorList>
            <person name="Perez-Brocal V."/>
            <person name="Gil R."/>
            <person name="Ramos S."/>
            <person name="Lamelas A."/>
            <person name="Postigo M."/>
            <person name="Michelena J.M."/>
            <person name="Silva F.J."/>
            <person name="Moya A."/>
            <person name="Latorre A."/>
        </authorList>
    </citation>
    <scope>NUCLEOTIDE SEQUENCE [LARGE SCALE GENOMIC DNA]</scope>
    <source>
        <strain>Cc</strain>
    </source>
</reference>
<sequence>MELMFQDTNEIYNISESIFNKVFNEPLVHQIIVCYLARRRQGSKAQKSRSEVSGSGKKPWRQKGTGRARSGSLRSPIWRSGGVTFAAKPKKYKLKMNKKMYRYAIKSILSELIRQNRFFLFKEFIIEFPKTKILLKKLELINLKSVLIITAHKNTSLLYASRNLYHVCVINVKSINPVILISYEKVLITLSAIKKIEVMFK</sequence>
<accession>Q057A5</accession>
<evidence type="ECO:0000255" key="1">
    <source>
        <dbReference type="HAMAP-Rule" id="MF_01328"/>
    </source>
</evidence>
<evidence type="ECO:0000256" key="2">
    <source>
        <dbReference type="SAM" id="MobiDB-lite"/>
    </source>
</evidence>
<evidence type="ECO:0000305" key="3"/>
<protein>
    <recommendedName>
        <fullName evidence="1">Large ribosomal subunit protein uL4</fullName>
    </recommendedName>
    <alternativeName>
        <fullName evidence="3">50S ribosomal protein L4</fullName>
    </alternativeName>
</protein>
<organism>
    <name type="scientific">Buchnera aphidicola subsp. Cinara cedri (strain Cc)</name>
    <dbReference type="NCBI Taxonomy" id="372461"/>
    <lineage>
        <taxon>Bacteria</taxon>
        <taxon>Pseudomonadati</taxon>
        <taxon>Pseudomonadota</taxon>
        <taxon>Gammaproteobacteria</taxon>
        <taxon>Enterobacterales</taxon>
        <taxon>Erwiniaceae</taxon>
        <taxon>Buchnera</taxon>
    </lineage>
</organism>
<gene>
    <name evidence="1" type="primary">rplD</name>
    <name type="ordered locus">BCc_340</name>
</gene>
<proteinExistence type="inferred from homology"/>
<feature type="chain" id="PRO_1000052363" description="Large ribosomal subunit protein uL4">
    <location>
        <begin position="1"/>
        <end position="201"/>
    </location>
</feature>
<feature type="region of interest" description="Disordered" evidence="2">
    <location>
        <begin position="45"/>
        <end position="75"/>
    </location>
</feature>
<keyword id="KW-1185">Reference proteome</keyword>
<keyword id="KW-0687">Ribonucleoprotein</keyword>
<keyword id="KW-0689">Ribosomal protein</keyword>
<keyword id="KW-0694">RNA-binding</keyword>
<keyword id="KW-0699">rRNA-binding</keyword>